<reference key="1">
    <citation type="submission" date="2009-02" db="EMBL/GenBank/DDBJ databases">
        <title>Vibrio splendidus str. LGP32 complete genome.</title>
        <authorList>
            <person name="Mazel D."/>
            <person name="Le Roux F."/>
        </authorList>
    </citation>
    <scope>NUCLEOTIDE SEQUENCE [LARGE SCALE GENOMIC DNA]</scope>
    <source>
        <strain>LGP32</strain>
    </source>
</reference>
<protein>
    <recommendedName>
        <fullName evidence="1">Transcription antitermination protein NusB</fullName>
    </recommendedName>
    <alternativeName>
        <fullName evidence="1">Antitermination factor NusB</fullName>
    </alternativeName>
</protein>
<comment type="function">
    <text evidence="1">Involved in transcription antitermination. Required for transcription of ribosomal RNA (rRNA) genes. Binds specifically to the boxA antiterminator sequence of the ribosomal RNA (rrn) operons.</text>
</comment>
<comment type="similarity">
    <text evidence="1">Belongs to the NusB family.</text>
</comment>
<accession>B7VJA4</accession>
<organism>
    <name type="scientific">Vibrio atlanticus (strain LGP32)</name>
    <name type="common">Vibrio splendidus (strain Mel32)</name>
    <dbReference type="NCBI Taxonomy" id="575788"/>
    <lineage>
        <taxon>Bacteria</taxon>
        <taxon>Pseudomonadati</taxon>
        <taxon>Pseudomonadota</taxon>
        <taxon>Gammaproteobacteria</taxon>
        <taxon>Vibrionales</taxon>
        <taxon>Vibrionaceae</taxon>
        <taxon>Vibrio</taxon>
    </lineage>
</organism>
<proteinExistence type="inferred from homology"/>
<dbReference type="EMBL" id="FM954972">
    <property type="protein sequence ID" value="CAV19568.1"/>
    <property type="molecule type" value="Genomic_DNA"/>
</dbReference>
<dbReference type="SMR" id="B7VJA4"/>
<dbReference type="STRING" id="575788.VS_2409"/>
<dbReference type="KEGG" id="vsp:VS_2409"/>
<dbReference type="eggNOG" id="COG0781">
    <property type="taxonomic scope" value="Bacteria"/>
</dbReference>
<dbReference type="HOGENOM" id="CLU_087843_4_1_6"/>
<dbReference type="Proteomes" id="UP000009100">
    <property type="component" value="Chromosome 1"/>
</dbReference>
<dbReference type="GO" id="GO:0005829">
    <property type="term" value="C:cytosol"/>
    <property type="evidence" value="ECO:0007669"/>
    <property type="project" value="TreeGrafter"/>
</dbReference>
<dbReference type="GO" id="GO:0003723">
    <property type="term" value="F:RNA binding"/>
    <property type="evidence" value="ECO:0007669"/>
    <property type="project" value="UniProtKB-UniRule"/>
</dbReference>
<dbReference type="GO" id="GO:0006353">
    <property type="term" value="P:DNA-templated transcription termination"/>
    <property type="evidence" value="ECO:0007669"/>
    <property type="project" value="UniProtKB-UniRule"/>
</dbReference>
<dbReference type="GO" id="GO:0031564">
    <property type="term" value="P:transcription antitermination"/>
    <property type="evidence" value="ECO:0007669"/>
    <property type="project" value="UniProtKB-KW"/>
</dbReference>
<dbReference type="FunFam" id="1.10.940.10:FF:000001">
    <property type="entry name" value="Transcription antitermination factor NusB"/>
    <property type="match status" value="1"/>
</dbReference>
<dbReference type="Gene3D" id="1.10.940.10">
    <property type="entry name" value="NusB-like"/>
    <property type="match status" value="1"/>
</dbReference>
<dbReference type="HAMAP" id="MF_00073">
    <property type="entry name" value="NusB"/>
    <property type="match status" value="1"/>
</dbReference>
<dbReference type="InterPro" id="IPR035926">
    <property type="entry name" value="NusB-like_sf"/>
</dbReference>
<dbReference type="InterPro" id="IPR011605">
    <property type="entry name" value="NusB_fam"/>
</dbReference>
<dbReference type="InterPro" id="IPR006027">
    <property type="entry name" value="NusB_RsmB_TIM44"/>
</dbReference>
<dbReference type="NCBIfam" id="TIGR01951">
    <property type="entry name" value="nusB"/>
    <property type="match status" value="1"/>
</dbReference>
<dbReference type="PANTHER" id="PTHR11078:SF3">
    <property type="entry name" value="ANTITERMINATION NUSB DOMAIN-CONTAINING PROTEIN"/>
    <property type="match status" value="1"/>
</dbReference>
<dbReference type="PANTHER" id="PTHR11078">
    <property type="entry name" value="N UTILIZATION SUBSTANCE PROTEIN B-RELATED"/>
    <property type="match status" value="1"/>
</dbReference>
<dbReference type="Pfam" id="PF01029">
    <property type="entry name" value="NusB"/>
    <property type="match status" value="1"/>
</dbReference>
<dbReference type="SUPFAM" id="SSF48013">
    <property type="entry name" value="NusB-like"/>
    <property type="match status" value="1"/>
</dbReference>
<gene>
    <name evidence="1" type="primary">nusB</name>
    <name type="ordered locus">VS_2409</name>
</gene>
<evidence type="ECO:0000255" key="1">
    <source>
        <dbReference type="HAMAP-Rule" id="MF_00073"/>
    </source>
</evidence>
<keyword id="KW-0694">RNA-binding</keyword>
<keyword id="KW-0804">Transcription</keyword>
<keyword id="KW-0889">Transcription antitermination</keyword>
<keyword id="KW-0805">Transcription regulation</keyword>
<feature type="chain" id="PRO_1000192468" description="Transcription antitermination protein NusB">
    <location>
        <begin position="1"/>
        <end position="155"/>
    </location>
</feature>
<name>NUSB_VIBA3</name>
<sequence>MGASVKPAARRNARQFALQAIYSWQITKENIATVEEQFLSGGKYDEEEHHAAEPALAMPETDVAYFRDLLTGVALSHMELDSKLRPFVSRPMQDLDLMELALLRLAMYEMTRREDVPYKVVINEAIELAKVFAAEDSHKFVNGVLDKAAPHVRKK</sequence>